<protein>
    <recommendedName>
        <fullName evidence="4">Glutamate receptor ionotropic, NMDA 1</fullName>
        <shortName>GluN1</shortName>
    </recommendedName>
    <alternativeName>
        <fullName>Glutamate [NMDA] receptor subunit zeta-1</fullName>
    </alternativeName>
    <alternativeName>
        <fullName>N-methyl-D-aspartate receptor 1</fullName>
    </alternativeName>
    <alternativeName>
        <fullName>N-methyl-D-aspartate receptor subunit NR1</fullName>
        <shortName>NMD-R1</shortName>
    </alternativeName>
</protein>
<evidence type="ECO:0000250" key="1">
    <source>
        <dbReference type="UniProtKB" id="A0A1L8F5J9"/>
    </source>
</evidence>
<evidence type="ECO:0000250" key="2">
    <source>
        <dbReference type="UniProtKB" id="P35438"/>
    </source>
</evidence>
<evidence type="ECO:0000250" key="3">
    <source>
        <dbReference type="UniProtKB" id="P35439"/>
    </source>
</evidence>
<evidence type="ECO:0000250" key="4">
    <source>
        <dbReference type="UniProtKB" id="Q05586"/>
    </source>
</evidence>
<evidence type="ECO:0000255" key="5"/>
<evidence type="ECO:0000303" key="6">
    <source ref="1"/>
</evidence>
<evidence type="ECO:0000305" key="7"/>
<dbReference type="EMBL" id="AB195993">
    <property type="protein sequence ID" value="BAD74216.1"/>
    <property type="molecule type" value="mRNA"/>
</dbReference>
<dbReference type="EMBL" id="AB195994">
    <property type="protein sequence ID" value="BAD74217.1"/>
    <property type="molecule type" value="mRNA"/>
</dbReference>
<dbReference type="EMBL" id="AB195995">
    <property type="protein sequence ID" value="BAD74218.1"/>
    <property type="molecule type" value="mRNA"/>
</dbReference>
<dbReference type="RefSeq" id="NP_001008717.1">
    <molecule id="Q5R1P0-2"/>
    <property type="nucleotide sequence ID" value="NM_001008717.1"/>
</dbReference>
<dbReference type="RefSeq" id="XP_038531013.1">
    <molecule id="Q5R1P0-1"/>
    <property type="nucleotide sequence ID" value="XM_038675085.1"/>
</dbReference>
<dbReference type="RefSeq" id="XP_038531017.1">
    <molecule id="Q5R1P0-3"/>
    <property type="nucleotide sequence ID" value="XM_038675089.1"/>
</dbReference>
<dbReference type="RefSeq" id="XP_038531019.1">
    <molecule id="Q5R1P0-4"/>
    <property type="nucleotide sequence ID" value="XM_038675091.1"/>
</dbReference>
<dbReference type="SMR" id="Q5R1P0"/>
<dbReference type="FunCoup" id="Q5R1P0">
    <property type="interactions" value="417"/>
</dbReference>
<dbReference type="STRING" id="9615.ENSCAFP00000037473"/>
<dbReference type="GlyCosmos" id="Q5R1P0">
    <property type="glycosylation" value="12 sites, No reported glycans"/>
</dbReference>
<dbReference type="PaxDb" id="9612-ENSCAFP00000030425"/>
<dbReference type="Ensembl" id="ENSCAFT00030009788.1">
    <molecule id="Q5R1P0-3"/>
    <property type="protein sequence ID" value="ENSCAFP00030008563.1"/>
    <property type="gene ID" value="ENSCAFG00030005339.1"/>
</dbReference>
<dbReference type="Ensembl" id="ENSCAFT00030009880.1">
    <molecule id="Q5R1P0-1"/>
    <property type="protein sequence ID" value="ENSCAFP00030008649.1"/>
    <property type="gene ID" value="ENSCAFG00030005339.1"/>
</dbReference>
<dbReference type="Ensembl" id="ENSCAFT00040022091.1">
    <molecule id="Q5R1P0-3"/>
    <property type="protein sequence ID" value="ENSCAFP00040019164.1"/>
    <property type="gene ID" value="ENSCAFG00040011986.1"/>
</dbReference>
<dbReference type="Ensembl" id="ENSCAFT00040022256.1">
    <molecule id="Q5R1P0-1"/>
    <property type="protein sequence ID" value="ENSCAFP00040019306.1"/>
    <property type="gene ID" value="ENSCAFG00040011986.1"/>
</dbReference>
<dbReference type="GeneID" id="494007"/>
<dbReference type="KEGG" id="cfa:494007"/>
<dbReference type="CTD" id="2902"/>
<dbReference type="eggNOG" id="KOG4440">
    <property type="taxonomic scope" value="Eukaryota"/>
</dbReference>
<dbReference type="InParanoid" id="Q5R1P0"/>
<dbReference type="OrthoDB" id="2986at33554"/>
<dbReference type="Reactome" id="R-CFA-3928662">
    <property type="pathway name" value="EPHB-mediated forward signaling"/>
</dbReference>
<dbReference type="Reactome" id="R-CFA-438066">
    <property type="pathway name" value="Unblocking of NMDA receptors, glutamate binding and activation"/>
</dbReference>
<dbReference type="Reactome" id="R-CFA-5673001">
    <property type="pathway name" value="RAF/MAP kinase cascade"/>
</dbReference>
<dbReference type="Reactome" id="R-CFA-8849932">
    <property type="pathway name" value="Synaptic adhesion-like molecules"/>
</dbReference>
<dbReference type="Reactome" id="R-CFA-9609736">
    <property type="pathway name" value="Assembly and cell surface presentation of NMDA receptors"/>
</dbReference>
<dbReference type="Proteomes" id="UP000002254">
    <property type="component" value="Unplaced"/>
</dbReference>
<dbReference type="Proteomes" id="UP000694429">
    <property type="component" value="Chromosome 9"/>
</dbReference>
<dbReference type="Proteomes" id="UP000694542">
    <property type="component" value="Chromosome 9"/>
</dbReference>
<dbReference type="Proteomes" id="UP000805418">
    <property type="component" value="Unplaced"/>
</dbReference>
<dbReference type="GO" id="GO:0043005">
    <property type="term" value="C:neuron projection"/>
    <property type="evidence" value="ECO:0000318"/>
    <property type="project" value="GO_Central"/>
</dbReference>
<dbReference type="GO" id="GO:0017146">
    <property type="term" value="C:NMDA selective glutamate receptor complex"/>
    <property type="evidence" value="ECO:0000250"/>
    <property type="project" value="UniProtKB"/>
</dbReference>
<dbReference type="GO" id="GO:0005886">
    <property type="term" value="C:plasma membrane"/>
    <property type="evidence" value="ECO:0000250"/>
    <property type="project" value="UniProtKB"/>
</dbReference>
<dbReference type="GO" id="GO:0098839">
    <property type="term" value="C:postsynaptic density membrane"/>
    <property type="evidence" value="ECO:0000250"/>
    <property type="project" value="UniProtKB"/>
</dbReference>
<dbReference type="GO" id="GO:0045211">
    <property type="term" value="C:postsynaptic membrane"/>
    <property type="evidence" value="ECO:0000250"/>
    <property type="project" value="UniProtKB"/>
</dbReference>
<dbReference type="GO" id="GO:0045202">
    <property type="term" value="C:synapse"/>
    <property type="evidence" value="ECO:0000318"/>
    <property type="project" value="GO_Central"/>
</dbReference>
<dbReference type="GO" id="GO:0022849">
    <property type="term" value="F:glutamate-gated calcium ion channel activity"/>
    <property type="evidence" value="ECO:0000250"/>
    <property type="project" value="UniProtKB"/>
</dbReference>
<dbReference type="GO" id="GO:0016594">
    <property type="term" value="F:glycine binding"/>
    <property type="evidence" value="ECO:0000250"/>
    <property type="project" value="UniProtKB"/>
</dbReference>
<dbReference type="GO" id="GO:0015280">
    <property type="term" value="F:ligand-gated sodium channel activity"/>
    <property type="evidence" value="ECO:0000250"/>
    <property type="project" value="UniProtKB"/>
</dbReference>
<dbReference type="GO" id="GO:0046872">
    <property type="term" value="F:metal ion binding"/>
    <property type="evidence" value="ECO:0007669"/>
    <property type="project" value="UniProtKB-KW"/>
</dbReference>
<dbReference type="GO" id="GO:0004972">
    <property type="term" value="F:NMDA glutamate receptor activity"/>
    <property type="evidence" value="ECO:0000250"/>
    <property type="project" value="UniProtKB"/>
</dbReference>
<dbReference type="GO" id="GO:0038023">
    <property type="term" value="F:signaling receptor activity"/>
    <property type="evidence" value="ECO:0000318"/>
    <property type="project" value="GO_Central"/>
</dbReference>
<dbReference type="GO" id="GO:0070588">
    <property type="term" value="P:calcium ion transmembrane transport"/>
    <property type="evidence" value="ECO:0000250"/>
    <property type="project" value="UniProtKB"/>
</dbReference>
<dbReference type="GO" id="GO:0007268">
    <property type="term" value="P:chemical synaptic transmission"/>
    <property type="evidence" value="ECO:0000318"/>
    <property type="project" value="GO_Central"/>
</dbReference>
<dbReference type="GO" id="GO:0035235">
    <property type="term" value="P:ionotropic glutamate receptor signaling pathway"/>
    <property type="evidence" value="ECO:0000318"/>
    <property type="project" value="GO_Central"/>
</dbReference>
<dbReference type="GO" id="GO:0051290">
    <property type="term" value="P:protein heterotetramerization"/>
    <property type="evidence" value="ECO:0000250"/>
    <property type="project" value="UniProtKB"/>
</dbReference>
<dbReference type="GO" id="GO:0042391">
    <property type="term" value="P:regulation of membrane potential"/>
    <property type="evidence" value="ECO:0000318"/>
    <property type="project" value="GO_Central"/>
</dbReference>
<dbReference type="GO" id="GO:0048167">
    <property type="term" value="P:regulation of synaptic plasticity"/>
    <property type="evidence" value="ECO:0000250"/>
    <property type="project" value="UniProtKB"/>
</dbReference>
<dbReference type="GO" id="GO:0035725">
    <property type="term" value="P:sodium ion transmembrane transport"/>
    <property type="evidence" value="ECO:0000250"/>
    <property type="project" value="UniProtKB"/>
</dbReference>
<dbReference type="CDD" id="cd06379">
    <property type="entry name" value="PBP1_iGluR_NMDA_NR1"/>
    <property type="match status" value="1"/>
</dbReference>
<dbReference type="CDD" id="cd13719">
    <property type="entry name" value="PBP2_iGluR_NMDA_Nr1"/>
    <property type="match status" value="1"/>
</dbReference>
<dbReference type="FunFam" id="3.40.190.10:FF:000010">
    <property type="entry name" value="glutamate receptor ionotropic, NMDA 1 isoform X1"/>
    <property type="match status" value="1"/>
</dbReference>
<dbReference type="FunFam" id="3.40.50.2300:FF:000025">
    <property type="entry name" value="glutamate receptor ionotropic, NMDA 1 isoform X1"/>
    <property type="match status" value="1"/>
</dbReference>
<dbReference type="FunFam" id="3.40.190.10:FF:000012">
    <property type="entry name" value="glutamate receptor ionotropic, NMDA 1 isoform X2"/>
    <property type="match status" value="1"/>
</dbReference>
<dbReference type="FunFam" id="3.40.50.2300:FF:000204">
    <property type="entry name" value="glutamate receptor ionotropic, NMDA 1 isoform X2"/>
    <property type="match status" value="1"/>
</dbReference>
<dbReference type="FunFam" id="3.40.190.10:FF:000025">
    <property type="entry name" value="glutamate receptor ionotropic, NMDA 1 isoform X3"/>
    <property type="match status" value="1"/>
</dbReference>
<dbReference type="FunFam" id="1.10.287.70:FF:000087">
    <property type="entry name" value="glutamate receptor ionotropic, NMDA 1 isoform X4"/>
    <property type="match status" value="1"/>
</dbReference>
<dbReference type="Gene3D" id="1.10.287.70">
    <property type="match status" value="1"/>
</dbReference>
<dbReference type="Gene3D" id="3.40.50.2300">
    <property type="match status" value="2"/>
</dbReference>
<dbReference type="Gene3D" id="3.40.190.10">
    <property type="entry name" value="Periplasmic binding protein-like II"/>
    <property type="match status" value="3"/>
</dbReference>
<dbReference type="InterPro" id="IPR001828">
    <property type="entry name" value="ANF_lig-bd_rcpt"/>
</dbReference>
<dbReference type="InterPro" id="IPR019594">
    <property type="entry name" value="Glu/Gly-bd"/>
</dbReference>
<dbReference type="InterPro" id="IPR001508">
    <property type="entry name" value="Iono_Glu_rcpt_met"/>
</dbReference>
<dbReference type="InterPro" id="IPR015683">
    <property type="entry name" value="Ionotropic_Glu_rcpt"/>
</dbReference>
<dbReference type="InterPro" id="IPR001320">
    <property type="entry name" value="Iontro_rcpt_C"/>
</dbReference>
<dbReference type="InterPro" id="IPR049872">
    <property type="entry name" value="NMDA1-like_ligand-bd"/>
</dbReference>
<dbReference type="InterPro" id="IPR049873">
    <property type="entry name" value="NMDA1-like_N"/>
</dbReference>
<dbReference type="InterPro" id="IPR028082">
    <property type="entry name" value="Peripla_BP_I"/>
</dbReference>
<dbReference type="PANTHER" id="PTHR18966">
    <property type="entry name" value="IONOTROPIC GLUTAMATE RECEPTOR"/>
    <property type="match status" value="1"/>
</dbReference>
<dbReference type="Pfam" id="PF01094">
    <property type="entry name" value="ANF_receptor"/>
    <property type="match status" value="1"/>
</dbReference>
<dbReference type="Pfam" id="PF00060">
    <property type="entry name" value="Lig_chan"/>
    <property type="match status" value="1"/>
</dbReference>
<dbReference type="Pfam" id="PF10613">
    <property type="entry name" value="Lig_chan-Glu_bd"/>
    <property type="match status" value="1"/>
</dbReference>
<dbReference type="PRINTS" id="PR00177">
    <property type="entry name" value="NMDARECEPTOR"/>
</dbReference>
<dbReference type="SMART" id="SM00918">
    <property type="entry name" value="Lig_chan-Glu_bd"/>
    <property type="match status" value="1"/>
</dbReference>
<dbReference type="SMART" id="SM00079">
    <property type="entry name" value="PBPe"/>
    <property type="match status" value="1"/>
</dbReference>
<dbReference type="SUPFAM" id="SSF53822">
    <property type="entry name" value="Periplasmic binding protein-like I"/>
    <property type="match status" value="1"/>
</dbReference>
<dbReference type="SUPFAM" id="SSF53850">
    <property type="entry name" value="Periplasmic binding protein-like II"/>
    <property type="match status" value="1"/>
</dbReference>
<dbReference type="SUPFAM" id="SSF81324">
    <property type="entry name" value="Voltage-gated potassium channels"/>
    <property type="match status" value="1"/>
</dbReference>
<gene>
    <name evidence="6" type="primary">GRIN1</name>
    <name type="synonym">NMDAR1</name>
</gene>
<comment type="function">
    <text evidence="2 3 4">Component of N-methyl-D-aspartate (NMDA) receptors (NMDARs) that function as heterotetrameric, ligand-gated cation channels with high calcium permeability and voltage-dependent block by Mg(2+). NMDARs participate in synaptic plasticity for learning and memory formation by contributing to the long-term potentiation (LTP) (By similarity). Channel activation requires binding of the neurotransmitter L-glutamate to the GluN2 subunit, glycine or D-serine binding to the GluN1 subunit, plus membrane depolarization to eliminate channel inhibition by Mg(2+) (By similarity). NMDARs mediate simultaneously the potasium efflux and the influx of calcium and sodium (By similarity). Each GluN2 or GluN3 subunit confers differential attributes to channel properties, including activation, deactivation and desensitization kinetics, pH sensitivity, Ca2(+) permeability, and binding to allosteric modulators. The GluN3 subunits confer distinctive ion channel activation mechanism, which relies exclusively on glycine and does not involve glutamate (By similarity).</text>
</comment>
<comment type="catalytic activity">
    <reaction evidence="4">
        <text>Ca(2+)(in) = Ca(2+)(out)</text>
        <dbReference type="Rhea" id="RHEA:29671"/>
        <dbReference type="ChEBI" id="CHEBI:29108"/>
    </reaction>
</comment>
<comment type="catalytic activity">
    <reaction evidence="4">
        <text>Na(+)(in) = Na(+)(out)</text>
        <dbReference type="Rhea" id="RHEA:34963"/>
        <dbReference type="ChEBI" id="CHEBI:29101"/>
    </reaction>
</comment>
<comment type="catalytic activity">
    <reaction evidence="2">
        <text>K(+)(in) = K(+)(out)</text>
        <dbReference type="Rhea" id="RHEA:29463"/>
        <dbReference type="ChEBI" id="CHEBI:29103"/>
    </reaction>
</comment>
<comment type="subunit">
    <text evidence="2 3 4">Heterotetramer; the NMDAR subunits are modular and harbor tiered domains that function in concert to regulate opening and closing of the cation-selective ion channel pore. Forms heterotetrameric channels composed of two GluN1/zeta subunits (GRIN1), and two identical GluN2/epsilon subunits (GRIN2A, GRIN2B, GRIN2C or GRIN2D) or GluN3 subunits (GRIN3A or GRIN3B) (in vitro). Can also form heterotetrameric channels that contain at least two GluN1 subunits and at least two different GluN2 subunits (or a combination of one GluN2 and one GluN3 subunits) (in vitro) (By similarity). In vivo, the subunit composition may vary in function of the expression levels of the different subunits (By similarity). Found in a complex with GRIN2A or GRIN2B, GRIN3A and PPP2CB (By similarity). Found in a complex with GRIN2A or GRIN2B and GRIN3B (By similarity). Interacts with SNX27 (via PDZ domain); the interaction is required for recycling to the plasma membrane when endocytosed and prevent degradation in lysosomes (By similarity). Interacts with DLG4 and MPDZ. Interacts with LRFN1 and LRFN2 (By similarity). Interacts with MYZAP (By similarity). Found in a complex with DLG4 and PRR7 (By similarity). Found in a complex with GRIN2B and PRR7. Interacts with PRR7; the interaction is reduced following NMDA receptor activity (By similarity).</text>
</comment>
<comment type="subcellular location">
    <subcellularLocation>
        <location evidence="2">Cell membrane</location>
        <topology evidence="3">Multi-pass membrane protein</topology>
    </subcellularLocation>
    <subcellularLocation>
        <location evidence="2">Postsynaptic cell membrane</location>
    </subcellularLocation>
    <subcellularLocation>
        <location evidence="3">Postsynaptic density membrane</location>
    </subcellularLocation>
    <subcellularLocation>
        <location evidence="2">Synaptic cell membrane</location>
    </subcellularLocation>
    <text evidence="2 3">Synaptic cell membrane targeting is dependent of GRIN2B/GluN2B subunit (By similarity). Association with GRIN3A occurs in the endoplasmic reticulum (By similarity).</text>
</comment>
<comment type="alternative products">
    <event type="alternative splicing"/>
    <isoform>
        <id>Q5R1P0-1</id>
        <name>1</name>
        <sequence type="displayed"/>
    </isoform>
    <isoform>
        <id>Q5R1P0-2</id>
        <name>2</name>
        <name evidence="6">NR1-4</name>
        <sequence type="described" ref="VSP_014220"/>
    </isoform>
    <isoform>
        <id>Q5R1P0-3</id>
        <name>3</name>
        <name>NR1-3b</name>
        <sequence type="described" ref="VSP_014221"/>
    </isoform>
    <isoform>
        <id>Q5R1P0-4</id>
        <name>4</name>
        <name>NR1-1</name>
        <sequence type="described" ref="VSP_014220 VSP_014221"/>
    </isoform>
</comment>
<comment type="domain">
    <text evidence="1">A hydrophobic region that gives rise to the prediction of a transmembrane span does not cross the membrane, but is part of a discontinuously helical region that dips into the membrane and is probably part of the pore and of the selectivity filter.</text>
</comment>
<comment type="domain">
    <text evidence="4">The extracellular N-terminal domain (NTD) is a site of allosteric regulation to modulate overall receptor function.</text>
</comment>
<comment type="domain">
    <text evidence="4">The ligand-binding domain (LBD) binds to glycine (GluN1 and GluN3 subunits) and glutamate (GluN2 subunits) and control opening of the channel gate.</text>
</comment>
<comment type="domain">
    <text evidence="4">The transmembrane domain (TMD) harbors the channel gate and pore.</text>
</comment>
<comment type="PTM">
    <text evidence="4">NMDA is probably regulated by C-terminal phosphorylation of an isoform of GRIN1 by PKC. Dephosphorylated on Ser-897 probably by protein phosphatase 2A (PPP2CB). Its phosphorylated state is influenced by the formation of the NMDAR-PPP2CB complex and the NMDAR channel activity.</text>
</comment>
<comment type="similarity">
    <text evidence="7">Belongs to the glutamate-gated ion channel (TC 1.A.10.1) family. NR1/GRIN1 subfamily.</text>
</comment>
<sequence length="943" mass="106118">MSTMRLLTLALLFSCSFARAACDPKIVNIGAVLSTRKHEQMFREAVNQANKRHGSWKIQLNATSVTHKPNAIQMALSVCEDLISSQVYAILVSHPPTPNDHFTPTPVSYTAGFYRIPVLGLTTRMSIYSDKSIHLSFLRTVPPYSHQSSVWFEMMRVYSWNHIILLVSDDHEGRAAQKRLETLLEERESKSKKRNYENLDQLSYDHKRGPKAEKVLQFDPGTKNVTALLMEARELEARVIILSASEDDAATVYRAAAMLNMTGSGYVWLVGEREISGNALRYAPDGIIGLQLINGKNESAHISDAVGVVAQAVHELLEKENITDPPRGCVGNTNIWKTGPLFKRVLMSSKYADGVTGRVEFNEDGDRKFANYSIMNLQNRKLVQVGIYNGTHVIPNDRKIIWPGGETEKPRGYQMSTRLKIVTIHQEPFVYVKPTLSDGTCKEEFTVNGDPVKKVICTGPNDTSPGSPRHTVPQCCYGFCIDLLIKLARTMNFTYEVHLVADGKFGTQERVNNSNKKEWNGMMGELLSGQADMIVAPLTINNERAQYIEFSKPFKYQGLTILVKKEIPRSTLDSFMQPFQSTLWLLVGLSVHVVAVMLYLLDRFSPFGRFKVNSEEEEEDALTLSSAMWFSWGVLLNSGIGEGAPRSFSARILGMVWAGFAMIIVASYTANLAAFLVLDRPEERITGINDPRLRNPSDKFIYATVKQSSVDIYFRRQVELSTMYRHMEKHNYESAAEAIQAVRDNKLHAFIWDSAVLEFEASQKCDLVTTGELFFRSGFGIGMRKDSPWKQNVSLSILKSHENGFMEDLDKTWVRYQECDSRSNAPATLTFENMAGVFMLVAGGIVAGIFLIFIEIAYKRHKDARRKQMQLAFAAVNVWRKNLQDRKSGRAEPDPKKKATFRAITSTLASSFKRRRSSKDTQYHPTDITGTLNLSDPSVSTVV</sequence>
<keyword id="KW-0025">Alternative splicing</keyword>
<keyword id="KW-0106">Calcium</keyword>
<keyword id="KW-1003">Cell membrane</keyword>
<keyword id="KW-1015">Disulfide bond</keyword>
<keyword id="KW-0325">Glycoprotein</keyword>
<keyword id="KW-0407">Ion channel</keyword>
<keyword id="KW-0406">Ion transport</keyword>
<keyword id="KW-1071">Ligand-gated ion channel</keyword>
<keyword id="KW-0460">Magnesium</keyword>
<keyword id="KW-0472">Membrane</keyword>
<keyword id="KW-0479">Metal-binding</keyword>
<keyword id="KW-0597">Phosphoprotein</keyword>
<keyword id="KW-0628">Postsynaptic cell membrane</keyword>
<keyword id="KW-0675">Receptor</keyword>
<keyword id="KW-1185">Reference proteome</keyword>
<keyword id="KW-0732">Signal</keyword>
<keyword id="KW-0770">Synapse</keyword>
<keyword id="KW-0812">Transmembrane</keyword>
<keyword id="KW-1133">Transmembrane helix</keyword>
<keyword id="KW-0813">Transport</keyword>
<keyword id="KW-0862">Zinc</keyword>
<feature type="signal peptide" evidence="5">
    <location>
        <begin position="1"/>
        <end position="20"/>
    </location>
</feature>
<feature type="chain" id="PRO_0000011586" description="Glutamate receptor ionotropic, NMDA 1">
    <location>
        <begin position="21"/>
        <end position="943"/>
    </location>
</feature>
<feature type="topological domain" description="Extracellular" evidence="3">
    <location>
        <begin position="21"/>
        <end position="580"/>
    </location>
</feature>
<feature type="transmembrane region" description="Helical" evidence="3">
    <location>
        <begin position="581"/>
        <end position="601"/>
    </location>
</feature>
<feature type="topological domain" description="Cytoplasmic" evidence="3">
    <location>
        <begin position="602"/>
        <end position="623"/>
    </location>
</feature>
<feature type="intramembrane region" description="Discontinuously helical" evidence="1">
    <location>
        <begin position="624"/>
        <end position="645"/>
    </location>
</feature>
<feature type="topological domain" description="Cytoplasmic" evidence="3">
    <location>
        <begin position="646"/>
        <end position="651"/>
    </location>
</feature>
<feature type="transmembrane region" description="Helical" evidence="3">
    <location>
        <begin position="652"/>
        <end position="668"/>
    </location>
</feature>
<feature type="topological domain" description="Extracellular" evidence="3">
    <location>
        <begin position="669"/>
        <end position="833"/>
    </location>
</feature>
<feature type="transmembrane region" description="Helical" evidence="3">
    <location>
        <begin position="834"/>
        <end position="854"/>
    </location>
</feature>
<feature type="topological domain" description="Cytoplasmic" evidence="3">
    <location>
        <begin position="855"/>
        <end position="943"/>
    </location>
</feature>
<feature type="region of interest" description="Pore-forming" evidence="1">
    <location>
        <begin position="624"/>
        <end position="645"/>
    </location>
</feature>
<feature type="binding site" evidence="3">
    <location>
        <position position="537"/>
    </location>
    <ligand>
        <name>glycine</name>
        <dbReference type="ChEBI" id="CHEBI:57305"/>
    </ligand>
</feature>
<feature type="binding site" evidence="3">
    <location>
        <position position="539"/>
    </location>
    <ligand>
        <name>glycine</name>
        <dbReference type="ChEBI" id="CHEBI:57305"/>
    </ligand>
</feature>
<feature type="binding site" evidence="3">
    <location>
        <position position="544"/>
    </location>
    <ligand>
        <name>glycine</name>
        <dbReference type="ChEBI" id="CHEBI:57305"/>
    </ligand>
</feature>
<feature type="binding site" evidence="3">
    <location>
        <position position="709"/>
    </location>
    <ligand>
        <name>glycine</name>
        <dbReference type="ChEBI" id="CHEBI:57305"/>
    </ligand>
</feature>
<feature type="binding site" evidence="3">
    <location>
        <position position="753"/>
    </location>
    <ligand>
        <name>glycine</name>
        <dbReference type="ChEBI" id="CHEBI:57305"/>
    </ligand>
</feature>
<feature type="modified residue" description="Phosphoserine" evidence="4">
    <location>
        <position position="910"/>
    </location>
</feature>
<feature type="modified residue" description="Phosphoserine" evidence="4">
    <location>
        <position position="911"/>
    </location>
</feature>
<feature type="modified residue" description="Phosphoserine" evidence="4">
    <location>
        <position position="917"/>
    </location>
</feature>
<feature type="modified residue" description="Phosphoserine" evidence="4">
    <location>
        <position position="918"/>
    </location>
</feature>
<feature type="glycosylation site" description="N-linked (GlcNAc...) asparagine" evidence="5">
    <location>
        <position position="61"/>
    </location>
</feature>
<feature type="glycosylation site" description="N-linked (GlcNAc...) asparagine" evidence="5">
    <location>
        <position position="224"/>
    </location>
</feature>
<feature type="glycosylation site" description="N-linked (GlcNAc...) asparagine" evidence="5">
    <location>
        <position position="260"/>
    </location>
</feature>
<feature type="glycosylation site" description="N-linked (GlcNAc...) asparagine" evidence="5">
    <location>
        <position position="297"/>
    </location>
</feature>
<feature type="glycosylation site" description="N-linked (GlcNAc...) asparagine" evidence="5">
    <location>
        <position position="321"/>
    </location>
</feature>
<feature type="glycosylation site" description="N-linked (GlcNAc...) asparagine" evidence="5">
    <location>
        <position position="371"/>
    </location>
</feature>
<feature type="glycosylation site" description="N-linked (GlcNAc...) asparagine" evidence="5">
    <location>
        <position position="389"/>
    </location>
</feature>
<feature type="glycosylation site" description="N-linked (GlcNAc...) asparagine" evidence="5">
    <location>
        <position position="461"/>
    </location>
</feature>
<feature type="glycosylation site" description="N-linked (GlcNAc...) asparagine" evidence="5">
    <location>
        <position position="492"/>
    </location>
</feature>
<feature type="glycosylation site" description="N-linked (GlcNAc...) asparagine" evidence="5">
    <location>
        <position position="512"/>
    </location>
</feature>
<feature type="glycosylation site" description="N-linked (GlcNAc...) asparagine" evidence="5">
    <location>
        <position position="695"/>
    </location>
</feature>
<feature type="glycosylation site" description="N-linked (GlcNAc...) asparagine" evidence="5">
    <location>
        <position position="792"/>
    </location>
</feature>
<feature type="disulfide bond" evidence="3">
    <location>
        <begin position="79"/>
        <end position="329"/>
    </location>
</feature>
<feature type="disulfide bond" evidence="3">
    <location>
        <begin position="441"/>
        <end position="475"/>
    </location>
</feature>
<feature type="disulfide bond" evidence="3">
    <location>
        <begin position="457"/>
        <end position="476"/>
    </location>
</feature>
<feature type="disulfide bond" evidence="3">
    <location>
        <begin position="765"/>
        <end position="819"/>
    </location>
</feature>
<feature type="splice variant" id="VSP_014220" description="In isoform 2 and isoform 4." evidence="6">
    <location>
        <begin position="190"/>
        <end position="210"/>
    </location>
</feature>
<feature type="splice variant" id="VSP_014221" description="In isoform 3 and isoform 4." evidence="6">
    <location>
        <begin position="885"/>
        <end position="921"/>
    </location>
</feature>
<accession>Q5R1P0</accession>
<accession>Q5R1P1</accession>
<accession>Q5R1P2</accession>
<name>NMDZ1_CANLF</name>
<proteinExistence type="evidence at transcript level"/>
<organism>
    <name type="scientific">Canis lupus familiaris</name>
    <name type="common">Dog</name>
    <name type="synonym">Canis familiaris</name>
    <dbReference type="NCBI Taxonomy" id="9615"/>
    <lineage>
        <taxon>Eukaryota</taxon>
        <taxon>Metazoa</taxon>
        <taxon>Chordata</taxon>
        <taxon>Craniata</taxon>
        <taxon>Vertebrata</taxon>
        <taxon>Euteleostomi</taxon>
        <taxon>Mammalia</taxon>
        <taxon>Eutheria</taxon>
        <taxon>Laurasiatheria</taxon>
        <taxon>Carnivora</taxon>
        <taxon>Caniformia</taxon>
        <taxon>Canidae</taxon>
        <taxon>Canis</taxon>
    </lineage>
</organism>
<reference key="1">
    <citation type="submission" date="2004-12" db="EMBL/GenBank/DDBJ databases">
        <title>Canis familiaris glutamate receptor, ionotropic, N-methyl D-aspartate 1 (GRIN1), transcript variant NR1-4, mRNA, complete cds.</title>
        <authorList>
            <person name="Taki K."/>
            <person name="Shinjo K."/>
        </authorList>
    </citation>
    <scope>NUCLEOTIDE SEQUENCE [MRNA] (ISOFORMS 2; 3 AND 4)</scope>
    <source>
        <tissue>Brain cortex</tissue>
    </source>
</reference>